<sequence length="319" mass="34774">MKGYPFLDKANAPFVDRHVTKAGEIFYPWDGKRIDGFGLIGAPLSKSSISHSGASFAPTVIRKCLHAFSTYSVEEDLDLAQLKLTDLGDITMHVTDIVGSQARIEETMTKLLENEQNWQPIVLGGDHSISFPSIKAFASAKGTIGVIQFDAHHDLRNLEDGGPCNGTPFRSLLETGSLVGEHLVQIGIRDFSNSYPYRKYAEKHGVKVYTMKDVNARGLLTILDEAVAKLKRSVDVIYVSVDMDVLDQAHAPGCPAIGPGGMDSTTLLQGIFHLGKDSLVQGMDIVEVDPTLDFREMTSRAAAHVILNYLKGKCIKSIG</sequence>
<dbReference type="EC" id="3.5.3.8" evidence="1"/>
<dbReference type="EMBL" id="BA000004">
    <property type="protein sequence ID" value="BAB05704.1"/>
    <property type="molecule type" value="Genomic_DNA"/>
</dbReference>
<dbReference type="PIR" id="A83898">
    <property type="entry name" value="A83898"/>
</dbReference>
<dbReference type="RefSeq" id="WP_010898143.1">
    <property type="nucleotide sequence ID" value="NC_002570.2"/>
</dbReference>
<dbReference type="SMR" id="Q9KBE3"/>
<dbReference type="STRING" id="272558.gene:10727883"/>
<dbReference type="KEGG" id="bha:BH1985"/>
<dbReference type="eggNOG" id="COG0010">
    <property type="taxonomic scope" value="Bacteria"/>
</dbReference>
<dbReference type="HOGENOM" id="CLU_039478_0_2_9"/>
<dbReference type="OrthoDB" id="9788689at2"/>
<dbReference type="UniPathway" id="UPA00379">
    <property type="reaction ID" value="UER00552"/>
</dbReference>
<dbReference type="Proteomes" id="UP000001258">
    <property type="component" value="Chromosome"/>
</dbReference>
<dbReference type="GO" id="GO:0008783">
    <property type="term" value="F:agmatinase activity"/>
    <property type="evidence" value="ECO:0007669"/>
    <property type="project" value="TreeGrafter"/>
</dbReference>
<dbReference type="GO" id="GO:0050415">
    <property type="term" value="F:formimidoylglutamase activity"/>
    <property type="evidence" value="ECO:0007669"/>
    <property type="project" value="UniProtKB-UniRule"/>
</dbReference>
<dbReference type="GO" id="GO:0030145">
    <property type="term" value="F:manganese ion binding"/>
    <property type="evidence" value="ECO:0007669"/>
    <property type="project" value="UniProtKB-UniRule"/>
</dbReference>
<dbReference type="GO" id="GO:0019556">
    <property type="term" value="P:L-histidine catabolic process to glutamate and formamide"/>
    <property type="evidence" value="ECO:0007669"/>
    <property type="project" value="UniProtKB-UniPathway"/>
</dbReference>
<dbReference type="GO" id="GO:0019557">
    <property type="term" value="P:L-histidine catabolic process to glutamate and formate"/>
    <property type="evidence" value="ECO:0007669"/>
    <property type="project" value="UniProtKB-UniPathway"/>
</dbReference>
<dbReference type="GO" id="GO:0033389">
    <property type="term" value="P:putrescine biosynthetic process from arginine, via agmatine"/>
    <property type="evidence" value="ECO:0007669"/>
    <property type="project" value="TreeGrafter"/>
</dbReference>
<dbReference type="CDD" id="cd09990">
    <property type="entry name" value="Agmatinase-like"/>
    <property type="match status" value="1"/>
</dbReference>
<dbReference type="Gene3D" id="3.40.800.10">
    <property type="entry name" value="Ureohydrolase domain"/>
    <property type="match status" value="1"/>
</dbReference>
<dbReference type="HAMAP" id="MF_00737">
    <property type="entry name" value="Formimidoylglutam"/>
    <property type="match status" value="1"/>
</dbReference>
<dbReference type="InterPro" id="IPR005923">
    <property type="entry name" value="HutG"/>
</dbReference>
<dbReference type="InterPro" id="IPR006035">
    <property type="entry name" value="Ureohydrolase"/>
</dbReference>
<dbReference type="InterPro" id="IPR023696">
    <property type="entry name" value="Ureohydrolase_dom_sf"/>
</dbReference>
<dbReference type="InterPro" id="IPR020855">
    <property type="entry name" value="Ureohydrolase_Mn_BS"/>
</dbReference>
<dbReference type="NCBIfam" id="TIGR01227">
    <property type="entry name" value="hutG"/>
    <property type="match status" value="1"/>
</dbReference>
<dbReference type="PANTHER" id="PTHR11358">
    <property type="entry name" value="ARGINASE/AGMATINASE"/>
    <property type="match status" value="1"/>
</dbReference>
<dbReference type="PANTHER" id="PTHR11358:SF35">
    <property type="entry name" value="FORMIMIDOYLGLUTAMASE"/>
    <property type="match status" value="1"/>
</dbReference>
<dbReference type="Pfam" id="PF00491">
    <property type="entry name" value="Arginase"/>
    <property type="match status" value="1"/>
</dbReference>
<dbReference type="PIRSF" id="PIRSF036979">
    <property type="entry name" value="Arginase"/>
    <property type="match status" value="1"/>
</dbReference>
<dbReference type="PRINTS" id="PR00116">
    <property type="entry name" value="ARGINASE"/>
</dbReference>
<dbReference type="SUPFAM" id="SSF52768">
    <property type="entry name" value="Arginase/deacetylase"/>
    <property type="match status" value="1"/>
</dbReference>
<dbReference type="PROSITE" id="PS01053">
    <property type="entry name" value="ARGINASE_1"/>
    <property type="match status" value="1"/>
</dbReference>
<dbReference type="PROSITE" id="PS51409">
    <property type="entry name" value="ARGINASE_2"/>
    <property type="match status" value="1"/>
</dbReference>
<name>HUTG_HALH5</name>
<organism>
    <name type="scientific">Halalkalibacterium halodurans (strain ATCC BAA-125 / DSM 18197 / FERM 7344 / JCM 9153 / C-125)</name>
    <name type="common">Bacillus halodurans</name>
    <dbReference type="NCBI Taxonomy" id="272558"/>
    <lineage>
        <taxon>Bacteria</taxon>
        <taxon>Bacillati</taxon>
        <taxon>Bacillota</taxon>
        <taxon>Bacilli</taxon>
        <taxon>Bacillales</taxon>
        <taxon>Bacillaceae</taxon>
        <taxon>Halalkalibacterium (ex Joshi et al. 2022)</taxon>
    </lineage>
</organism>
<protein>
    <recommendedName>
        <fullName evidence="1">Formimidoylglutamase</fullName>
        <ecNumber evidence="1">3.5.3.8</ecNumber>
    </recommendedName>
    <alternativeName>
        <fullName evidence="1">Formiminoglutamase</fullName>
    </alternativeName>
    <alternativeName>
        <fullName evidence="1">Formiminoglutamate hydrolase</fullName>
    </alternativeName>
</protein>
<reference key="1">
    <citation type="journal article" date="2000" name="Nucleic Acids Res.">
        <title>Complete genome sequence of the alkaliphilic bacterium Bacillus halodurans and genomic sequence comparison with Bacillus subtilis.</title>
        <authorList>
            <person name="Takami H."/>
            <person name="Nakasone K."/>
            <person name="Takaki Y."/>
            <person name="Maeno G."/>
            <person name="Sasaki R."/>
            <person name="Masui N."/>
            <person name="Fuji F."/>
            <person name="Hirama C."/>
            <person name="Nakamura Y."/>
            <person name="Ogasawara N."/>
            <person name="Kuhara S."/>
            <person name="Horikoshi K."/>
        </authorList>
    </citation>
    <scope>NUCLEOTIDE SEQUENCE [LARGE SCALE GENOMIC DNA]</scope>
    <source>
        <strain>ATCC BAA-125 / DSM 18197 / FERM 7344 / JCM 9153 / C-125</strain>
    </source>
</reference>
<accession>Q9KBE3</accession>
<gene>
    <name evidence="1" type="primary">hutG</name>
    <name type="ordered locus">BH1985</name>
</gene>
<feature type="chain" id="PRO_0000173748" description="Formimidoylglutamase">
    <location>
        <begin position="1"/>
        <end position="319"/>
    </location>
</feature>
<feature type="binding site" evidence="1">
    <location>
        <position position="127"/>
    </location>
    <ligand>
        <name>Mn(2+)</name>
        <dbReference type="ChEBI" id="CHEBI:29035"/>
        <label>1</label>
    </ligand>
</feature>
<feature type="binding site" evidence="1">
    <location>
        <position position="150"/>
    </location>
    <ligand>
        <name>Mn(2+)</name>
        <dbReference type="ChEBI" id="CHEBI:29035"/>
        <label>1</label>
    </ligand>
</feature>
<feature type="binding site" evidence="1">
    <location>
        <position position="150"/>
    </location>
    <ligand>
        <name>Mn(2+)</name>
        <dbReference type="ChEBI" id="CHEBI:29035"/>
        <label>2</label>
    </ligand>
</feature>
<feature type="binding site" evidence="1">
    <location>
        <position position="152"/>
    </location>
    <ligand>
        <name>Mn(2+)</name>
        <dbReference type="ChEBI" id="CHEBI:29035"/>
        <label>2</label>
    </ligand>
</feature>
<feature type="binding site" evidence="1">
    <location>
        <position position="154"/>
    </location>
    <ligand>
        <name>Mn(2+)</name>
        <dbReference type="ChEBI" id="CHEBI:29035"/>
        <label>1</label>
    </ligand>
</feature>
<feature type="binding site" evidence="1">
    <location>
        <position position="242"/>
    </location>
    <ligand>
        <name>Mn(2+)</name>
        <dbReference type="ChEBI" id="CHEBI:29035"/>
        <label>1</label>
    </ligand>
</feature>
<feature type="binding site" evidence="1">
    <location>
        <position position="242"/>
    </location>
    <ligand>
        <name>Mn(2+)</name>
        <dbReference type="ChEBI" id="CHEBI:29035"/>
        <label>2</label>
    </ligand>
</feature>
<feature type="binding site" evidence="1">
    <location>
        <position position="244"/>
    </location>
    <ligand>
        <name>Mn(2+)</name>
        <dbReference type="ChEBI" id="CHEBI:29035"/>
        <label>2</label>
    </ligand>
</feature>
<comment type="function">
    <text evidence="1">Catalyzes the conversion of N-formimidoyl-L-glutamate to L-glutamate and formamide.</text>
</comment>
<comment type="catalytic activity">
    <reaction evidence="1">
        <text>N-formimidoyl-L-glutamate + H2O = formamide + L-glutamate</text>
        <dbReference type="Rhea" id="RHEA:22492"/>
        <dbReference type="ChEBI" id="CHEBI:15377"/>
        <dbReference type="ChEBI" id="CHEBI:16397"/>
        <dbReference type="ChEBI" id="CHEBI:29985"/>
        <dbReference type="ChEBI" id="CHEBI:58928"/>
        <dbReference type="EC" id="3.5.3.8"/>
    </reaction>
</comment>
<comment type="cofactor">
    <cofactor evidence="1">
        <name>Mn(2+)</name>
        <dbReference type="ChEBI" id="CHEBI:29035"/>
    </cofactor>
    <text evidence="1">Binds 2 manganese ions per subunit.</text>
</comment>
<comment type="pathway">
    <text evidence="1">Amino-acid degradation; L-histidine degradation into L-glutamate; L-glutamate from N-formimidoyl-L-glutamate (hydrolase route): step 1/1.</text>
</comment>
<comment type="similarity">
    <text evidence="1 2">Belongs to the arginase family.</text>
</comment>
<evidence type="ECO:0000255" key="1">
    <source>
        <dbReference type="HAMAP-Rule" id="MF_00737"/>
    </source>
</evidence>
<evidence type="ECO:0000305" key="2"/>
<keyword id="KW-0369">Histidine metabolism</keyword>
<keyword id="KW-0378">Hydrolase</keyword>
<keyword id="KW-0464">Manganese</keyword>
<keyword id="KW-0479">Metal-binding</keyword>
<keyword id="KW-1185">Reference proteome</keyword>
<proteinExistence type="inferred from homology"/>